<dbReference type="EMBL" id="AY958085">
    <property type="protein sequence ID" value="AAX45711.1"/>
    <property type="molecule type" value="Genomic_DNA"/>
</dbReference>
<dbReference type="RefSeq" id="YP_636430.1">
    <property type="nucleotide sequence ID" value="NC_008116.1"/>
</dbReference>
<dbReference type="SMR" id="Q32RU6"/>
<dbReference type="GeneID" id="4108660"/>
<dbReference type="GO" id="GO:0009535">
    <property type="term" value="C:chloroplast thylakoid membrane"/>
    <property type="evidence" value="ECO:0007669"/>
    <property type="project" value="UniProtKB-SubCell"/>
</dbReference>
<dbReference type="GO" id="GO:0045158">
    <property type="term" value="F:electron transporter, transferring electrons within cytochrome b6/f complex of photosystem II activity"/>
    <property type="evidence" value="ECO:0007669"/>
    <property type="project" value="UniProtKB-UniRule"/>
</dbReference>
<dbReference type="GO" id="GO:0045156">
    <property type="term" value="F:electron transporter, transferring electrons within the cyclic electron transport pathway of photosynthesis activity"/>
    <property type="evidence" value="ECO:0007669"/>
    <property type="project" value="InterPro"/>
</dbReference>
<dbReference type="GO" id="GO:0016491">
    <property type="term" value="F:oxidoreductase activity"/>
    <property type="evidence" value="ECO:0007669"/>
    <property type="project" value="InterPro"/>
</dbReference>
<dbReference type="GO" id="GO:0009767">
    <property type="term" value="P:photosynthetic electron transport chain"/>
    <property type="evidence" value="ECO:0007669"/>
    <property type="project" value="InterPro"/>
</dbReference>
<dbReference type="CDD" id="cd00290">
    <property type="entry name" value="cytochrome_b_C"/>
    <property type="match status" value="1"/>
</dbReference>
<dbReference type="FunFam" id="1.10.287.980:FF:000001">
    <property type="entry name" value="Cytochrome b6-f complex subunit 4"/>
    <property type="match status" value="1"/>
</dbReference>
<dbReference type="FunFam" id="1.20.5.510:FF:000002">
    <property type="entry name" value="Cytochrome b6-f complex subunit 4"/>
    <property type="match status" value="1"/>
</dbReference>
<dbReference type="Gene3D" id="1.10.287.980">
    <property type="entry name" value="plastocyanin oxidoreductase"/>
    <property type="match status" value="1"/>
</dbReference>
<dbReference type="Gene3D" id="1.20.5.510">
    <property type="entry name" value="Single helix bin"/>
    <property type="match status" value="1"/>
</dbReference>
<dbReference type="HAMAP" id="MF_01344">
    <property type="entry name" value="Cytb6_f_subIV"/>
    <property type="match status" value="1"/>
</dbReference>
<dbReference type="InterPro" id="IPR005798">
    <property type="entry name" value="Cyt_b/b6_C"/>
</dbReference>
<dbReference type="InterPro" id="IPR036150">
    <property type="entry name" value="Cyt_b/b6_C_sf"/>
</dbReference>
<dbReference type="InterPro" id="IPR005870">
    <property type="entry name" value="Cyt_b6/f_cplx_suIV"/>
</dbReference>
<dbReference type="InterPro" id="IPR048260">
    <property type="entry name" value="Cytochrome_b_C_euk/bac"/>
</dbReference>
<dbReference type="NCBIfam" id="TIGR01156">
    <property type="entry name" value="cytb6_f_IV"/>
    <property type="match status" value="1"/>
</dbReference>
<dbReference type="PANTHER" id="PTHR19271">
    <property type="entry name" value="CYTOCHROME B"/>
    <property type="match status" value="1"/>
</dbReference>
<dbReference type="PANTHER" id="PTHR19271:SF16">
    <property type="entry name" value="CYTOCHROME B"/>
    <property type="match status" value="1"/>
</dbReference>
<dbReference type="Pfam" id="PF00032">
    <property type="entry name" value="Cytochrom_B_C"/>
    <property type="match status" value="1"/>
</dbReference>
<dbReference type="PIRSF" id="PIRSF000033">
    <property type="entry name" value="B6f_17K"/>
    <property type="match status" value="1"/>
</dbReference>
<dbReference type="SUPFAM" id="SSF81648">
    <property type="entry name" value="a domain/subunit of cytochrome bc1 complex (Ubiquinol-cytochrome c reductase)"/>
    <property type="match status" value="1"/>
</dbReference>
<dbReference type="PROSITE" id="PS51003">
    <property type="entry name" value="CYTB_CTER"/>
    <property type="match status" value="1"/>
</dbReference>
<evidence type="ECO:0000250" key="1"/>
<evidence type="ECO:0000255" key="2">
    <source>
        <dbReference type="HAMAP-Rule" id="MF_01344"/>
    </source>
</evidence>
<feature type="chain" id="PRO_0000061894" description="Cytochrome b6-f complex subunit 4">
    <location>
        <begin position="1"/>
        <end position="160"/>
    </location>
</feature>
<feature type="transmembrane region" description="Helical" evidence="2">
    <location>
        <begin position="36"/>
        <end position="56"/>
    </location>
</feature>
<feature type="transmembrane region" description="Helical" evidence="2">
    <location>
        <begin position="95"/>
        <end position="115"/>
    </location>
</feature>
<feature type="transmembrane region" description="Helical" evidence="2">
    <location>
        <begin position="131"/>
        <end position="151"/>
    </location>
</feature>
<proteinExistence type="inferred from homology"/>
<comment type="function">
    <text evidence="2">Component of the cytochrome b6-f complex, which mediates electron transfer between photosystem II (PSII) and photosystem I (PSI), cyclic electron flow around PSI, and state transitions.</text>
</comment>
<comment type="subunit">
    <text evidence="1">The 4 large subunits of the cytochrome b6-f complex are cytochrome b6, subunit IV (17 kDa polypeptide, petD), cytochrome f and the Rieske protein, while the 4 small subunits are petG, petL, petM and petN. The complex functions as a dimer (By similarity).</text>
</comment>
<comment type="subcellular location">
    <subcellularLocation>
        <location evidence="2">Plastid</location>
        <location evidence="2">Chloroplast thylakoid membrane</location>
        <topology evidence="2">Multi-pass membrane protein</topology>
    </subcellularLocation>
</comment>
<comment type="similarity">
    <text evidence="2">Belongs to the cytochrome b family. PetD subfamily.</text>
</comment>
<protein>
    <recommendedName>
        <fullName evidence="2">Cytochrome b6-f complex subunit 4</fullName>
    </recommendedName>
    <alternativeName>
        <fullName evidence="2">17 kDa polypeptide</fullName>
    </alternativeName>
</protein>
<organism>
    <name type="scientific">Staurastrum punctulatum</name>
    <name type="common">Green alga</name>
    <name type="synonym">Cosmoastrum punctulatum</name>
    <dbReference type="NCBI Taxonomy" id="102822"/>
    <lineage>
        <taxon>Eukaryota</taxon>
        <taxon>Viridiplantae</taxon>
        <taxon>Streptophyta</taxon>
        <taxon>Zygnematophyceae</taxon>
        <taxon>Zygnematophycidae</taxon>
        <taxon>Desmidiales</taxon>
        <taxon>Desmidiaceae</taxon>
        <taxon>Staurastrum</taxon>
    </lineage>
</organism>
<gene>
    <name evidence="2" type="primary">petD</name>
</gene>
<reference key="1">
    <citation type="journal article" date="2005" name="BMC Biol.">
        <title>The complete chloroplast DNA sequences of the charophycean green algae Staurastrum and Zygnema reveal that the chloroplast genome underwent extensive changes during the evolution of the Zygnematales.</title>
        <authorList>
            <person name="Turmel M."/>
            <person name="Otis C."/>
            <person name="Lemieux C."/>
        </authorList>
    </citation>
    <scope>NUCLEOTIDE SEQUENCE [LARGE SCALE GENOMIC DNA]</scope>
</reference>
<geneLocation type="chloroplast"/>
<sequence>MGVIKKPDLTDPVLRAKLAKGMGHHYYGEPAWPNDLLYMFPVCILGTIACNVGLAVLEPSLIGEPANPFATPLEILPEWYFFPVFQILRVVPNKLLGVLLMASVPVGLITVPFIENVNKFQNPFRRPVATTIFLIGTVVAVWLGIGATLPIDTSLTLGLF</sequence>
<accession>Q32RU6</accession>
<keyword id="KW-0150">Chloroplast</keyword>
<keyword id="KW-0249">Electron transport</keyword>
<keyword id="KW-0472">Membrane</keyword>
<keyword id="KW-0602">Photosynthesis</keyword>
<keyword id="KW-0934">Plastid</keyword>
<keyword id="KW-0793">Thylakoid</keyword>
<keyword id="KW-0812">Transmembrane</keyword>
<keyword id="KW-1133">Transmembrane helix</keyword>
<keyword id="KW-0813">Transport</keyword>
<name>PETD_STAPU</name>